<sequence>MSWLHKFFDLFLGESEEDAERETKPAQIPQQQEVHHPEGQLKRLEDPKIYYEYPKGKFRFPVVPDGYKNHDLRRRRTPSDEPKSAPRPSAAPYRERPRNEEEQHTYQAAEPAKKPFKPTNIPSPVYGFNQKPSVKKDVPKKPSETLNEPDKSVKEKVTLLSEEIERERGYPASDTQAHSKIESPFFPDTQFEKQPSGVLNRKDTEHDEALAKRPAEPSGNKVPFESGVQQPEKEEPFFPAEQAEEQTPPEMLTDTAAEGLSDSEVGREEPATAEEEQREQQPEKFEEPVFSAELDEEQTAPESQTEAVSEDEKAKEPSDSPVYNHHENAAEGAESPFVQEEQMDIRQEEPLFTDHEYSSEALAQAETVAKESEEPSESIINNHYDTLGEAQETKIDVQPDSHTELEKTEHMEQGSKSSTATLENRQEIRADKPREASEEPKKRPGVQEKRTEQSASSQKGPSVPFNVMMLKRDTHKQQKAEERRGSYVFPNVALLDVPPAQVQDDTAWIEEQRQLLDLTLKNFNVRANVVHVTQGPSVTRFEVHPEPGVKVNKITNLSDDIKLSLSAKDIRIEAPIPGKNTIGIEVPNRTSKVVDLRQMIRSSAFRTSKSPLTAALGLDISGNPVVIDLKKMPHGLIAGATGSGKSVCINTILVSLLYKADPSEVKVLLIDPKMVELAPYNKIPHLVSPVITDAKAATAALKWVVEEMERRYELFAHSGVRDIDRFNQLTAEHQMGEKLPYLVVIIDELADLMMVAPNDVEESIARIAQKARACGIHLLVATQRPSVDVITGLIKANIPTRIAFSVSSQVDSRTIIDIAGAEKLLGKGDMLFLENGSGKPVRLQGNFVSDREIDRVVSHVRSQMPPTYLFEQEELVRQGSALKEEDELFYEACEFVVEQNSASTSSLQRRFRIGYNRAARLIDMMEAEGMISEAKGSKPREVLITASDLINE</sequence>
<dbReference type="EMBL" id="AF008220">
    <property type="protein sequence ID" value="AAC00292.1"/>
    <property type="status" value="ALT_FRAME"/>
    <property type="molecule type" value="Genomic_DNA"/>
</dbReference>
<dbReference type="EMBL" id="AF008220">
    <property type="protein sequence ID" value="AAC00293.1"/>
    <property type="status" value="ALT_FRAME"/>
    <property type="molecule type" value="Genomic_DNA"/>
</dbReference>
<dbReference type="EMBL" id="AL009126">
    <property type="protein sequence ID" value="CAB14959.2"/>
    <property type="molecule type" value="Genomic_DNA"/>
</dbReference>
<dbReference type="PIR" id="B69999">
    <property type="entry name" value="B69999"/>
</dbReference>
<dbReference type="PIR" id="C69999">
    <property type="entry name" value="C69999"/>
</dbReference>
<dbReference type="RefSeq" id="NP_390859.2">
    <property type="nucleotide sequence ID" value="NC_000964.3"/>
</dbReference>
<dbReference type="RefSeq" id="WP_003229272.1">
    <property type="nucleotide sequence ID" value="NZ_OZ025638.1"/>
</dbReference>
<dbReference type="SMR" id="C0SP86"/>
<dbReference type="FunCoup" id="C0SP86">
    <property type="interactions" value="146"/>
</dbReference>
<dbReference type="STRING" id="224308.BSU29805"/>
<dbReference type="TCDB" id="3.A.12.1.5">
    <property type="family name" value="the septal dna translocator (s-dna-t) family"/>
</dbReference>
<dbReference type="PaxDb" id="224308-BSU29805"/>
<dbReference type="EnsemblBacteria" id="CAB14959">
    <property type="protein sequence ID" value="CAB14959"/>
    <property type="gene ID" value="BSU_29805"/>
</dbReference>
<dbReference type="GeneID" id="938522"/>
<dbReference type="KEGG" id="bsu:BSU29805"/>
<dbReference type="PATRIC" id="fig|224308.179.peg.3238"/>
<dbReference type="eggNOG" id="COG1674">
    <property type="taxonomic scope" value="Bacteria"/>
</dbReference>
<dbReference type="InParanoid" id="C0SP86"/>
<dbReference type="OrthoDB" id="9807790at2"/>
<dbReference type="PhylomeDB" id="C0SP86"/>
<dbReference type="BioCyc" id="BSUB:BSU29805-MONOMER"/>
<dbReference type="Proteomes" id="UP000001570">
    <property type="component" value="Chromosome"/>
</dbReference>
<dbReference type="GO" id="GO:0005737">
    <property type="term" value="C:cytoplasm"/>
    <property type="evidence" value="ECO:0007669"/>
    <property type="project" value="UniProtKB-SubCell"/>
</dbReference>
<dbReference type="GO" id="GO:0005524">
    <property type="term" value="F:ATP binding"/>
    <property type="evidence" value="ECO:0007669"/>
    <property type="project" value="UniProtKB-KW"/>
</dbReference>
<dbReference type="GO" id="GO:0016887">
    <property type="term" value="F:ATP hydrolysis activity"/>
    <property type="evidence" value="ECO:0007669"/>
    <property type="project" value="InterPro"/>
</dbReference>
<dbReference type="GO" id="GO:0003677">
    <property type="term" value="F:DNA binding"/>
    <property type="evidence" value="ECO:0007669"/>
    <property type="project" value="UniProtKB-KW"/>
</dbReference>
<dbReference type="GO" id="GO:0015616">
    <property type="term" value="F:DNA translocase activity"/>
    <property type="evidence" value="ECO:0000318"/>
    <property type="project" value="GO_Central"/>
</dbReference>
<dbReference type="GO" id="GO:0051301">
    <property type="term" value="P:cell division"/>
    <property type="evidence" value="ECO:0007669"/>
    <property type="project" value="UniProtKB-KW"/>
</dbReference>
<dbReference type="GO" id="GO:0007059">
    <property type="term" value="P:chromosome segregation"/>
    <property type="evidence" value="ECO:0007669"/>
    <property type="project" value="UniProtKB-KW"/>
</dbReference>
<dbReference type="CDD" id="cd01127">
    <property type="entry name" value="TrwB_TraG_TraD_VirD4"/>
    <property type="match status" value="1"/>
</dbReference>
<dbReference type="Gene3D" id="3.30.980.40">
    <property type="match status" value="1"/>
</dbReference>
<dbReference type="Gene3D" id="3.40.50.300">
    <property type="entry name" value="P-loop containing nucleotide triphosphate hydrolases"/>
    <property type="match status" value="1"/>
</dbReference>
<dbReference type="Gene3D" id="1.10.10.10">
    <property type="entry name" value="Winged helix-like DNA-binding domain superfamily/Winged helix DNA-binding domain"/>
    <property type="match status" value="1"/>
</dbReference>
<dbReference type="InterPro" id="IPR003593">
    <property type="entry name" value="AAA+_ATPase"/>
</dbReference>
<dbReference type="InterPro" id="IPR050206">
    <property type="entry name" value="FtsK/SpoIIIE/SftA"/>
</dbReference>
<dbReference type="InterPro" id="IPR041027">
    <property type="entry name" value="FtsK_alpha"/>
</dbReference>
<dbReference type="InterPro" id="IPR002543">
    <property type="entry name" value="FtsK_dom"/>
</dbReference>
<dbReference type="InterPro" id="IPR018541">
    <property type="entry name" value="Ftsk_gamma"/>
</dbReference>
<dbReference type="InterPro" id="IPR027417">
    <property type="entry name" value="P-loop_NTPase"/>
</dbReference>
<dbReference type="InterPro" id="IPR036388">
    <property type="entry name" value="WH-like_DNA-bd_sf"/>
</dbReference>
<dbReference type="InterPro" id="IPR036390">
    <property type="entry name" value="WH_DNA-bd_sf"/>
</dbReference>
<dbReference type="PANTHER" id="PTHR22683:SF42">
    <property type="entry name" value="DNA TRANSLOCASE SFTA"/>
    <property type="match status" value="1"/>
</dbReference>
<dbReference type="PANTHER" id="PTHR22683">
    <property type="entry name" value="SPORULATION PROTEIN RELATED"/>
    <property type="match status" value="1"/>
</dbReference>
<dbReference type="Pfam" id="PF17854">
    <property type="entry name" value="FtsK_alpha"/>
    <property type="match status" value="1"/>
</dbReference>
<dbReference type="Pfam" id="PF09397">
    <property type="entry name" value="FtsK_gamma"/>
    <property type="match status" value="1"/>
</dbReference>
<dbReference type="Pfam" id="PF01580">
    <property type="entry name" value="FtsK_SpoIIIE"/>
    <property type="match status" value="1"/>
</dbReference>
<dbReference type="SMART" id="SM00382">
    <property type="entry name" value="AAA"/>
    <property type="match status" value="1"/>
</dbReference>
<dbReference type="SMART" id="SM00843">
    <property type="entry name" value="Ftsk_gamma"/>
    <property type="match status" value="1"/>
</dbReference>
<dbReference type="SUPFAM" id="SSF52540">
    <property type="entry name" value="P-loop containing nucleoside triphosphate hydrolases"/>
    <property type="match status" value="1"/>
</dbReference>
<dbReference type="SUPFAM" id="SSF46785">
    <property type="entry name" value="Winged helix' DNA-binding domain"/>
    <property type="match status" value="1"/>
</dbReference>
<dbReference type="PROSITE" id="PS50901">
    <property type="entry name" value="FTSK"/>
    <property type="match status" value="1"/>
</dbReference>
<feature type="chain" id="PRO_0000389651" description="DNA translocase SftA">
    <location>
        <begin position="1"/>
        <end position="952"/>
    </location>
</feature>
<feature type="domain" description="FtsK" evidence="1">
    <location>
        <begin position="622"/>
        <end position="813"/>
    </location>
</feature>
<feature type="region of interest" description="Disordered" evidence="2">
    <location>
        <begin position="15"/>
        <end position="468"/>
    </location>
</feature>
<feature type="compositionally biased region" description="Basic and acidic residues" evidence="2">
    <location>
        <begin position="33"/>
        <end position="49"/>
    </location>
</feature>
<feature type="compositionally biased region" description="Basic and acidic residues" evidence="2">
    <location>
        <begin position="93"/>
        <end position="104"/>
    </location>
</feature>
<feature type="compositionally biased region" description="Basic and acidic residues" evidence="2">
    <location>
        <begin position="134"/>
        <end position="169"/>
    </location>
</feature>
<feature type="compositionally biased region" description="Basic and acidic residues" evidence="2">
    <location>
        <begin position="200"/>
        <end position="215"/>
    </location>
</feature>
<feature type="compositionally biased region" description="Low complexity" evidence="2">
    <location>
        <begin position="237"/>
        <end position="250"/>
    </location>
</feature>
<feature type="compositionally biased region" description="Basic and acidic residues" evidence="2">
    <location>
        <begin position="278"/>
        <end position="287"/>
    </location>
</feature>
<feature type="compositionally biased region" description="Basic and acidic residues" evidence="2">
    <location>
        <begin position="310"/>
        <end position="329"/>
    </location>
</feature>
<feature type="compositionally biased region" description="Basic and acidic residues" evidence="2">
    <location>
        <begin position="343"/>
        <end position="358"/>
    </location>
</feature>
<feature type="compositionally biased region" description="Basic and acidic residues" evidence="2">
    <location>
        <begin position="391"/>
        <end position="413"/>
    </location>
</feature>
<feature type="compositionally biased region" description="Polar residues" evidence="2">
    <location>
        <begin position="414"/>
        <end position="423"/>
    </location>
</feature>
<feature type="compositionally biased region" description="Basic and acidic residues" evidence="2">
    <location>
        <begin position="424"/>
        <end position="452"/>
    </location>
</feature>
<feature type="binding site" evidence="5">
    <location>
        <begin position="639"/>
        <end position="646"/>
    </location>
    <ligand>
        <name>ATP</name>
        <dbReference type="ChEBI" id="CHEBI:30616"/>
    </ligand>
</feature>
<feature type="mutagenesis site" description="Loss of ATPase activity." evidence="4">
    <original>K</original>
    <variation>A</variation>
    <location>
        <position position="645"/>
    </location>
</feature>
<keyword id="KW-0067">ATP-binding</keyword>
<keyword id="KW-0131">Cell cycle</keyword>
<keyword id="KW-0132">Cell division</keyword>
<keyword id="KW-0159">Chromosome partition</keyword>
<keyword id="KW-0963">Cytoplasm</keyword>
<keyword id="KW-0238">DNA-binding</keyword>
<keyword id="KW-0547">Nucleotide-binding</keyword>
<keyword id="KW-1185">Reference proteome</keyword>
<comment type="function">
    <text evidence="3 4">Required for the accurate completion of chromosome partitioning, in part by promoting efficient resolution of chromosome dimers, before the formation of the division septum. Binds to DNA in a non-specific manner. Shows ATPase activity. Not required for cytokinesis.</text>
</comment>
<comment type="subunit">
    <text evidence="4">Homohexamer.</text>
</comment>
<comment type="subcellular location">
    <subcellularLocation>
        <location evidence="3 4">Cytoplasm</location>
    </subcellularLocation>
    <text>Colocalizes with FtsZ at nascent division sites.</text>
</comment>
<comment type="disruption phenotype">
    <text evidence="3 4">Delay in chromosome segregation and an increase in the sensitivity to agents that induce DNA damage. They divide over unsegregated chromosomes with increased frequencies. A cell filamentation phenotype can also be seen, when associated with a noc deletion.</text>
</comment>
<comment type="miscellaneous">
    <text>StfA and SpoIIIE are not functionally redundant. They probably play distinct roles during growth and sporulation.</text>
</comment>
<comment type="similarity">
    <text evidence="5">Belongs to the FtsK/SpoIIIE/SftA family.</text>
</comment>
<comment type="sequence caution" evidence="5">
    <conflict type="frameshift">
        <sequence resource="EMBL-CDS" id="AAC00292"/>
    </conflict>
</comment>
<comment type="sequence caution" evidence="5">
    <conflict type="frameshift">
        <sequence resource="EMBL-CDS" id="AAC00293"/>
    </conflict>
</comment>
<accession>C0SP86</accession>
<accession>O34749</accession>
<accession>O34884</accession>
<accession>Q795T4</accession>
<accession>Q795T5</accession>
<organism>
    <name type="scientific">Bacillus subtilis (strain 168)</name>
    <dbReference type="NCBI Taxonomy" id="224308"/>
    <lineage>
        <taxon>Bacteria</taxon>
        <taxon>Bacillati</taxon>
        <taxon>Bacillota</taxon>
        <taxon>Bacilli</taxon>
        <taxon>Bacillales</taxon>
        <taxon>Bacillaceae</taxon>
        <taxon>Bacillus</taxon>
    </lineage>
</organism>
<evidence type="ECO:0000255" key="1">
    <source>
        <dbReference type="PROSITE-ProRule" id="PRU00289"/>
    </source>
</evidence>
<evidence type="ECO:0000256" key="2">
    <source>
        <dbReference type="SAM" id="MobiDB-lite"/>
    </source>
</evidence>
<evidence type="ECO:0000269" key="3">
    <source>
    </source>
</evidence>
<evidence type="ECO:0000269" key="4">
    <source>
    </source>
</evidence>
<evidence type="ECO:0000305" key="5"/>
<reference key="1">
    <citation type="journal article" date="1997" name="Microbiology">
        <title>Sequencing and functional annotation of the Bacillus subtilis genes in the 200 kb rrnB-dnaB region.</title>
        <authorList>
            <person name="Lapidus A."/>
            <person name="Galleron N."/>
            <person name="Sorokin A."/>
            <person name="Ehrlich S.D."/>
        </authorList>
    </citation>
    <scope>NUCLEOTIDE SEQUENCE [GENOMIC DNA]</scope>
    <source>
        <strain>168</strain>
    </source>
</reference>
<reference key="2">
    <citation type="journal article" date="1997" name="Nature">
        <title>The complete genome sequence of the Gram-positive bacterium Bacillus subtilis.</title>
        <authorList>
            <person name="Kunst F."/>
            <person name="Ogasawara N."/>
            <person name="Moszer I."/>
            <person name="Albertini A.M."/>
            <person name="Alloni G."/>
            <person name="Azevedo V."/>
            <person name="Bertero M.G."/>
            <person name="Bessieres P."/>
            <person name="Bolotin A."/>
            <person name="Borchert S."/>
            <person name="Borriss R."/>
            <person name="Boursier L."/>
            <person name="Brans A."/>
            <person name="Braun M."/>
            <person name="Brignell S.C."/>
            <person name="Bron S."/>
            <person name="Brouillet S."/>
            <person name="Bruschi C.V."/>
            <person name="Caldwell B."/>
            <person name="Capuano V."/>
            <person name="Carter N.M."/>
            <person name="Choi S.-K."/>
            <person name="Codani J.-J."/>
            <person name="Connerton I.F."/>
            <person name="Cummings N.J."/>
            <person name="Daniel R.A."/>
            <person name="Denizot F."/>
            <person name="Devine K.M."/>
            <person name="Duesterhoeft A."/>
            <person name="Ehrlich S.D."/>
            <person name="Emmerson P.T."/>
            <person name="Entian K.-D."/>
            <person name="Errington J."/>
            <person name="Fabret C."/>
            <person name="Ferrari E."/>
            <person name="Foulger D."/>
            <person name="Fritz C."/>
            <person name="Fujita M."/>
            <person name="Fujita Y."/>
            <person name="Fuma S."/>
            <person name="Galizzi A."/>
            <person name="Galleron N."/>
            <person name="Ghim S.-Y."/>
            <person name="Glaser P."/>
            <person name="Goffeau A."/>
            <person name="Golightly E.J."/>
            <person name="Grandi G."/>
            <person name="Guiseppi G."/>
            <person name="Guy B.J."/>
            <person name="Haga K."/>
            <person name="Haiech J."/>
            <person name="Harwood C.R."/>
            <person name="Henaut A."/>
            <person name="Hilbert H."/>
            <person name="Holsappel S."/>
            <person name="Hosono S."/>
            <person name="Hullo M.-F."/>
            <person name="Itaya M."/>
            <person name="Jones L.-M."/>
            <person name="Joris B."/>
            <person name="Karamata D."/>
            <person name="Kasahara Y."/>
            <person name="Klaerr-Blanchard M."/>
            <person name="Klein C."/>
            <person name="Kobayashi Y."/>
            <person name="Koetter P."/>
            <person name="Koningstein G."/>
            <person name="Krogh S."/>
            <person name="Kumano M."/>
            <person name="Kurita K."/>
            <person name="Lapidus A."/>
            <person name="Lardinois S."/>
            <person name="Lauber J."/>
            <person name="Lazarevic V."/>
            <person name="Lee S.-M."/>
            <person name="Levine A."/>
            <person name="Liu H."/>
            <person name="Masuda S."/>
            <person name="Mauel C."/>
            <person name="Medigue C."/>
            <person name="Medina N."/>
            <person name="Mellado R.P."/>
            <person name="Mizuno M."/>
            <person name="Moestl D."/>
            <person name="Nakai S."/>
            <person name="Noback M."/>
            <person name="Noone D."/>
            <person name="O'Reilly M."/>
            <person name="Ogawa K."/>
            <person name="Ogiwara A."/>
            <person name="Oudega B."/>
            <person name="Park S.-H."/>
            <person name="Parro V."/>
            <person name="Pohl T.M."/>
            <person name="Portetelle D."/>
            <person name="Porwollik S."/>
            <person name="Prescott A.M."/>
            <person name="Presecan E."/>
            <person name="Pujic P."/>
            <person name="Purnelle B."/>
            <person name="Rapoport G."/>
            <person name="Rey M."/>
            <person name="Reynolds S."/>
            <person name="Rieger M."/>
            <person name="Rivolta C."/>
            <person name="Rocha E."/>
            <person name="Roche B."/>
            <person name="Rose M."/>
            <person name="Sadaie Y."/>
            <person name="Sato T."/>
            <person name="Scanlan E."/>
            <person name="Schleich S."/>
            <person name="Schroeter R."/>
            <person name="Scoffone F."/>
            <person name="Sekiguchi J."/>
            <person name="Sekowska A."/>
            <person name="Seror S.J."/>
            <person name="Serror P."/>
            <person name="Shin B.-S."/>
            <person name="Soldo B."/>
            <person name="Sorokin A."/>
            <person name="Tacconi E."/>
            <person name="Takagi T."/>
            <person name="Takahashi H."/>
            <person name="Takemaru K."/>
            <person name="Takeuchi M."/>
            <person name="Tamakoshi A."/>
            <person name="Tanaka T."/>
            <person name="Terpstra P."/>
            <person name="Tognoni A."/>
            <person name="Tosato V."/>
            <person name="Uchiyama S."/>
            <person name="Vandenbol M."/>
            <person name="Vannier F."/>
            <person name="Vassarotti A."/>
            <person name="Viari A."/>
            <person name="Wambutt R."/>
            <person name="Wedler E."/>
            <person name="Wedler H."/>
            <person name="Weitzenegger T."/>
            <person name="Winters P."/>
            <person name="Wipat A."/>
            <person name="Yamamoto H."/>
            <person name="Yamane K."/>
            <person name="Yasumoto K."/>
            <person name="Yata K."/>
            <person name="Yoshida K."/>
            <person name="Yoshikawa H.-F."/>
            <person name="Zumstein E."/>
            <person name="Yoshikawa H."/>
            <person name="Danchin A."/>
        </authorList>
    </citation>
    <scope>NUCLEOTIDE SEQUENCE [LARGE SCALE GENOMIC DNA]</scope>
    <source>
        <strain>168</strain>
    </source>
</reference>
<reference key="3">
    <citation type="journal article" date="2009" name="Microbiology">
        <title>From a consortium sequence to a unified sequence: the Bacillus subtilis 168 reference genome a decade later.</title>
        <authorList>
            <person name="Barbe V."/>
            <person name="Cruveiller S."/>
            <person name="Kunst F."/>
            <person name="Lenoble P."/>
            <person name="Meurice G."/>
            <person name="Sekowska A."/>
            <person name="Vallenet D."/>
            <person name="Wang T."/>
            <person name="Moszer I."/>
            <person name="Medigue C."/>
            <person name="Danchin A."/>
        </authorList>
    </citation>
    <scope>SEQUENCE REVISION</scope>
</reference>
<reference key="4">
    <citation type="journal article" date="2009" name="Mol. Microbiol.">
        <title>The Bacillus subtilis SftA (YtpS) and SpoIIIE DNA translocases play distinct roles in growing cells to ensure faithful chromosome partitioning.</title>
        <authorList>
            <person name="Biller S.J."/>
            <person name="Burkholder W.F."/>
        </authorList>
    </citation>
    <scope>FUNCTION AS A DNA TRANSLOCASE</scope>
    <scope>SUBCELLULAR LOCATION</scope>
    <scope>DISRUPTION PHENOTYPE</scope>
    <source>
        <strain>168 / JH642</strain>
    </source>
</reference>
<reference key="5">
    <citation type="journal article" date="2009" name="Mol. Microbiol.">
        <title>SpoIIIE and a novel type of DNA translocase, SftA, couple chromosome segregation with cell division in Bacillus subtilis.</title>
        <authorList>
            <person name="Kaimer C."/>
            <person name="Gonzalez-Pastor J.E."/>
            <person name="Graumann P.L."/>
        </authorList>
    </citation>
    <scope>FUNCTION</scope>
    <scope>DNA-BINDING</scope>
    <scope>SUBUNIT</scope>
    <scope>SUBCELLULAR LOCATION</scope>
    <scope>DISRUPTION PHENOTYPE</scope>
    <scope>MUTAGENESIS OF LYS-645</scope>
    <source>
        <strain>168 / PY79</strain>
    </source>
</reference>
<proteinExistence type="evidence at protein level"/>
<name>SFTA_BACSU</name>
<gene>
    <name type="primary">sftA</name>
    <name type="synonym">ytpS</name>
    <name type="synonym">ytpT</name>
    <name type="ordered locus">BSU29805</name>
    <name type="ORF">BSU29810</name>
</gene>
<protein>
    <recommendedName>
        <fullName>DNA translocase SftA</fullName>
    </recommendedName>
    <alternativeName>
        <fullName>Septum-associated FtsK-like translocase of DNA</fullName>
    </alternativeName>
</protein>